<accession>Q86B91</accession>
<accession>A4V318</accession>
<accession>Q1EBX7</accession>
<accession>Q1EBX9</accession>
<accession>Q6NP49</accession>
<accession>Q86B90</accession>
<accession>Q8MUW7</accession>
<accession>Q8MZ15</accession>
<accession>Q9VEE7</accession>
<dbReference type="EMBL" id="AF509933">
    <property type="protein sequence ID" value="AAM43929.1"/>
    <property type="molecule type" value="mRNA"/>
</dbReference>
<dbReference type="EMBL" id="AE014297">
    <property type="protein sequence ID" value="AAF55477.3"/>
    <property type="molecule type" value="Genomic_DNA"/>
</dbReference>
<dbReference type="EMBL" id="AE014297">
    <property type="protein sequence ID" value="AAO41572.1"/>
    <property type="molecule type" value="Genomic_DNA"/>
</dbReference>
<dbReference type="EMBL" id="AE014297">
    <property type="protein sequence ID" value="AAO41573.3"/>
    <property type="molecule type" value="Genomic_DNA"/>
</dbReference>
<dbReference type="EMBL" id="AE014297">
    <property type="protein sequence ID" value="AAO41574.2"/>
    <property type="molecule type" value="Genomic_DNA"/>
</dbReference>
<dbReference type="EMBL" id="BT011082">
    <property type="protein sequence ID" value="AAR82748.1"/>
    <property type="molecule type" value="mRNA"/>
</dbReference>
<dbReference type="EMBL" id="BT025955">
    <property type="protein sequence ID" value="ABG02199.1"/>
    <property type="status" value="ALT_SEQ"/>
    <property type="molecule type" value="mRNA"/>
</dbReference>
<dbReference type="EMBL" id="BT025957">
    <property type="protein sequence ID" value="ABG02201.1"/>
    <property type="molecule type" value="mRNA"/>
</dbReference>
<dbReference type="EMBL" id="AY113420">
    <property type="protein sequence ID" value="AAM29425.1"/>
    <property type="status" value="ALT_INIT"/>
    <property type="molecule type" value="mRNA"/>
</dbReference>
<dbReference type="RefSeq" id="NP_001262686.1">
    <molecule id="Q86B91-1"/>
    <property type="nucleotide sequence ID" value="NM_001275757.1"/>
</dbReference>
<dbReference type="RefSeq" id="NP_732278.2">
    <molecule id="Q86B91-2"/>
    <property type="nucleotide sequence ID" value="NM_169780.5"/>
</dbReference>
<dbReference type="RefSeq" id="NP_788686.1">
    <molecule id="Q86B91-1"/>
    <property type="nucleotide sequence ID" value="NM_176509.4"/>
</dbReference>
<dbReference type="RefSeq" id="NP_788687.3">
    <molecule id="Q86B91-1"/>
    <property type="nucleotide sequence ID" value="NM_176510.5"/>
</dbReference>
<dbReference type="RefSeq" id="NP_788688.2">
    <molecule id="Q86B91-1"/>
    <property type="nucleotide sequence ID" value="NM_176511.3"/>
</dbReference>
<dbReference type="SMR" id="Q86B91"/>
<dbReference type="BioGRID" id="67179">
    <property type="interactions" value="17"/>
</dbReference>
<dbReference type="FunCoup" id="Q86B91">
    <property type="interactions" value="7"/>
</dbReference>
<dbReference type="IntAct" id="Q86B91">
    <property type="interactions" value="8"/>
</dbReference>
<dbReference type="STRING" id="7227.FBpp0088712"/>
<dbReference type="GlyGen" id="Q86B91">
    <property type="glycosylation" value="1 site"/>
</dbReference>
<dbReference type="PaxDb" id="7227-FBpp0088712"/>
<dbReference type="EnsemblMetazoa" id="FBtr0089771">
    <molecule id="Q86B91-1"/>
    <property type="protein sequence ID" value="FBpp0088712"/>
    <property type="gene ID" value="FBgn0261649"/>
</dbReference>
<dbReference type="EnsemblMetazoa" id="FBtr0089772">
    <molecule id="Q86B91-2"/>
    <property type="protein sequence ID" value="FBpp0088713"/>
    <property type="gene ID" value="FBgn0261649"/>
</dbReference>
<dbReference type="EnsemblMetazoa" id="FBtr0304905">
    <molecule id="Q86B91-1"/>
    <property type="protein sequence ID" value="FBpp0293444"/>
    <property type="gene ID" value="FBgn0261649"/>
</dbReference>
<dbReference type="EnsemblMetazoa" id="FBtr0337038">
    <molecule id="Q86B91-1"/>
    <property type="protein sequence ID" value="FBpp0307967"/>
    <property type="gene ID" value="FBgn0261649"/>
</dbReference>
<dbReference type="EnsemblMetazoa" id="FBtr0337039">
    <molecule id="Q86B91-1"/>
    <property type="protein sequence ID" value="FBpp0307968"/>
    <property type="gene ID" value="FBgn0261649"/>
</dbReference>
<dbReference type="GeneID" id="42148"/>
<dbReference type="KEGG" id="dme:Dmel_CG31247"/>
<dbReference type="UCSC" id="CG31247-RA">
    <molecule id="Q86B91-1"/>
    <property type="organism name" value="d. melanogaster"/>
</dbReference>
<dbReference type="UCSC" id="CG31247-RB">
    <property type="organism name" value="d. melanogaster"/>
</dbReference>
<dbReference type="UCSC" id="CG31247-RC">
    <property type="organism name" value="d. melanogaster"/>
</dbReference>
<dbReference type="AGR" id="FB:FBgn0261649"/>
<dbReference type="CTD" id="42148"/>
<dbReference type="FlyBase" id="FBgn0261649">
    <property type="gene designation" value="tinc"/>
</dbReference>
<dbReference type="VEuPathDB" id="VectorBase:FBgn0261649"/>
<dbReference type="eggNOG" id="ENOG502QUZG">
    <property type="taxonomic scope" value="Eukaryota"/>
</dbReference>
<dbReference type="HOGENOM" id="CLU_246923_0_0_1"/>
<dbReference type="InParanoid" id="Q86B91"/>
<dbReference type="OMA" id="EKGWLNK"/>
<dbReference type="OrthoDB" id="10033661at2759"/>
<dbReference type="PhylomeDB" id="Q86B91"/>
<dbReference type="BioGRID-ORCS" id="42148">
    <property type="hits" value="0 hits in 1 CRISPR screen"/>
</dbReference>
<dbReference type="ChiTaRS" id="tinc">
    <property type="organism name" value="fly"/>
</dbReference>
<dbReference type="GenomeRNAi" id="42148"/>
<dbReference type="PRO" id="PR:Q86B91"/>
<dbReference type="Proteomes" id="UP000000803">
    <property type="component" value="Chromosome 3R"/>
</dbReference>
<dbReference type="Bgee" id="FBgn0261649">
    <property type="expression patterns" value="Expressed in mechanosensory neuron of leg chordotonal organ in insect leg and 150 other cell types or tissues"/>
</dbReference>
<dbReference type="ExpressionAtlas" id="Q86B91">
    <property type="expression patterns" value="baseline and differential"/>
</dbReference>
<dbReference type="GO" id="GO:0016020">
    <property type="term" value="C:membrane"/>
    <property type="evidence" value="ECO:0007669"/>
    <property type="project" value="UniProtKB-SubCell"/>
</dbReference>
<dbReference type="GO" id="GO:0030154">
    <property type="term" value="P:cell differentiation"/>
    <property type="evidence" value="ECO:0007669"/>
    <property type="project" value="UniProtKB-KW"/>
</dbReference>
<dbReference type="GO" id="GO:0042478">
    <property type="term" value="P:regulation of eye photoreceptor cell development"/>
    <property type="evidence" value="ECO:0000315"/>
    <property type="project" value="FlyBase"/>
</dbReference>
<dbReference type="InterPro" id="IPR053291">
    <property type="entry name" value="Ommatidial_diff-associated"/>
</dbReference>
<dbReference type="PANTHER" id="PTHR21579">
    <property type="entry name" value="PROTEIN TINCAR"/>
    <property type="match status" value="1"/>
</dbReference>
<dbReference type="PANTHER" id="PTHR21579:SF20">
    <property type="entry name" value="PROTEIN TINCAR"/>
    <property type="match status" value="1"/>
</dbReference>
<sequence length="1513" mass="163381">MGGKHQGSGAGASSGGGSLNSSLCNSVMTNATTASSSLTQQQQQLQAKYIKSKRHQSRYTSLQHSGHDSGSYLHLNSLWSIWYGVMLTLFQGYLAMHGAYRFLGCSLIPWKIEPVAELNLQIVLSGVVFILLPVFFTSAVFKVGNLANDGIKLATGARERRCTLSPHDGLEEESRGGTLRALWTHGGPTAAFVHIVIALCLLLPRLLLEARIIENGLLPKEQIWATELDFVVINRRNLMAMSVVGATPFPRHHQPSNQQQSHHQHGRLNLTANSLEQDEEDYFNDTMFTAIRGVPAGGNNNLFDLRPDRMANGRKAAKTTATTRTTTTANKLDAGKGQYFEVPDLINQDIDEEERQELEEAIRGEEDDGDEGVGVGEEGTVIMPDFDELAPRTAVGTSTTTAKASSDADKLNVENWQQLGTLGKADASSSSSSTTSTTTTTTTSTTTTAATTTSTRGTSTTTTTTTIKPMEITTSRQSAHHHHGKSRKHHKHHNKQRQQQPPRRHHVASHEQAILESFPEEETTTRDSSIHRVRPEVLPELPIPSTPVSASNSKIIAIKAKNQKRRISKRAAGVEIEPEYLLGDANINSSEFVAKSNEEEPEESEDFELEDGDFQAVPALTPAPPAEPNGPKSGQDYVRLDGFAGMLQLFFGIDKPIDVAIFSQPPSAEFVNLLCALLVWSVRYPAVFWNTSKAFACVFSLQMVVAALDIILGYVGISNLYKLQIYAEAMPVHQPGLILNAVVTLALYLLSTALVLASSMVMYLYGHGRLATRMRDRSIITLKTHQTWIYFAHCASLCFVLALAVVKAPLLNDLSATYKNNLHCPTFLAALVGVTHLLLWIVIWLCLTIKRRWHFKLPPLDSTYGGLLGKSSAQPLLMSSGQRTGSNSSSSGCNSTSTTVNGGDSKPDMMSTATSTELGMGMGMGIGGGINGGMGGTGMGLAAQEDIYWPKLTPSSPKLKVTFNEVTSTSDDVLLIGDQEQTDGKRHTSRGASVCFASATGEVDDGEYATLRAATAGAVVGITMGSMKRGLSNTSVGVSLLHLSEYDELPPPPPANLHHQQQQQQQQQQRQAHSFAHGHPHDYANLSGLGGISDDNISEEGKLLACVRDDSITYASTSDLEPPQPSAQAPPPPPPLPIKGAPVPQPPAVMPHSAGIYGRAPQAMPEMMQLSPEHHHNPLQHSLQHPQHHPLQQQQQKQQTPQHPLQQQGNPHQHLVSPLAPVTVAVHTNEAHIASSSTPRCLRRADSGVPNEALTPRSDTTSTTESTNTTSPPERAPSESSSGVHSGEERELEVIIRPRANSKPPPRPPQPPIQEEPYGRCTNMRMSSFNADPAATSSAVINSATLPPQRSVPEQKFDYTAHCSTMPLPVGCHSQQLAGSGNGYASTSAMTSSMGGGGMPPLPPSQVSSFMTPNSMHYANASVALGNVSGQQQPHTTLPNGVRYSNPHFLRRLPHVTKAAESPYGHLGYGAGHHAFAKLPHETHPTIPEDRDSANYSMASDQDCGLYVTAQLH</sequence>
<evidence type="ECO:0000255" key="1"/>
<evidence type="ECO:0000256" key="2">
    <source>
        <dbReference type="SAM" id="MobiDB-lite"/>
    </source>
</evidence>
<evidence type="ECO:0000269" key="3">
    <source>
    </source>
</evidence>
<evidence type="ECO:0000269" key="4">
    <source>
    </source>
</evidence>
<evidence type="ECO:0000269" key="5">
    <source>
    </source>
</evidence>
<evidence type="ECO:0000269" key="6">
    <source>
    </source>
</evidence>
<evidence type="ECO:0000303" key="7">
    <source>
    </source>
</evidence>
<evidence type="ECO:0000305" key="8"/>
<evidence type="ECO:0000312" key="9">
    <source>
        <dbReference type="EMBL" id="AAM29425.1"/>
    </source>
</evidence>
<evidence type="ECO:0000312" key="10">
    <source>
        <dbReference type="EMBL" id="AAM43929.1"/>
    </source>
</evidence>
<evidence type="ECO:0000312" key="11">
    <source>
        <dbReference type="EMBL" id="AAO41572.1"/>
    </source>
</evidence>
<evidence type="ECO:0000312" key="12">
    <source>
        <dbReference type="EMBL" id="AAR82748.1"/>
    </source>
</evidence>
<evidence type="ECO:0000312" key="13">
    <source>
        <dbReference type="EMBL" id="ABG02201.1"/>
    </source>
</evidence>
<evidence type="ECO:0000312" key="14">
    <source>
        <dbReference type="FlyBase" id="FBgn0261649"/>
    </source>
</evidence>
<reference evidence="8 10" key="1">
    <citation type="journal article" date="2002" name="Mech. Dev.">
        <title>tincar encodes a novel transmembrane protein expressed in the Tinman-expressing cardioblasts of Drosophila.</title>
        <authorList>
            <person name="Hirota Y."/>
            <person name="Sawamoto K."/>
            <person name="Okano H."/>
        </authorList>
    </citation>
    <scope>NUCLEOTIDE SEQUENCE [MRNA] (ISOFORM B)</scope>
    <scope>SUBCELLULAR LOCATION</scope>
    <scope>TISSUE SPECIFICITY</scope>
    <scope>DEVELOPMENTAL STAGE</scope>
    <source>
        <strain evidence="5">Canton-S</strain>
        <tissue evidence="5">Embryo</tissue>
    </source>
</reference>
<reference evidence="11" key="2">
    <citation type="journal article" date="2000" name="Science">
        <title>The genome sequence of Drosophila melanogaster.</title>
        <authorList>
            <person name="Adams M.D."/>
            <person name="Celniker S.E."/>
            <person name="Holt R.A."/>
            <person name="Evans C.A."/>
            <person name="Gocayne J.D."/>
            <person name="Amanatides P.G."/>
            <person name="Scherer S.E."/>
            <person name="Li P.W."/>
            <person name="Hoskins R.A."/>
            <person name="Galle R.F."/>
            <person name="George R.A."/>
            <person name="Lewis S.E."/>
            <person name="Richards S."/>
            <person name="Ashburner M."/>
            <person name="Henderson S.N."/>
            <person name="Sutton G.G."/>
            <person name="Wortman J.R."/>
            <person name="Yandell M.D."/>
            <person name="Zhang Q."/>
            <person name="Chen L.X."/>
            <person name="Brandon R.C."/>
            <person name="Rogers Y.-H.C."/>
            <person name="Blazej R.G."/>
            <person name="Champe M."/>
            <person name="Pfeiffer B.D."/>
            <person name="Wan K.H."/>
            <person name="Doyle C."/>
            <person name="Baxter E.G."/>
            <person name="Helt G."/>
            <person name="Nelson C.R."/>
            <person name="Miklos G.L.G."/>
            <person name="Abril J.F."/>
            <person name="Agbayani A."/>
            <person name="An H.-J."/>
            <person name="Andrews-Pfannkoch C."/>
            <person name="Baldwin D."/>
            <person name="Ballew R.M."/>
            <person name="Basu A."/>
            <person name="Baxendale J."/>
            <person name="Bayraktaroglu L."/>
            <person name="Beasley E.M."/>
            <person name="Beeson K.Y."/>
            <person name="Benos P.V."/>
            <person name="Berman B.P."/>
            <person name="Bhandari D."/>
            <person name="Bolshakov S."/>
            <person name="Borkova D."/>
            <person name="Botchan M.R."/>
            <person name="Bouck J."/>
            <person name="Brokstein P."/>
            <person name="Brottier P."/>
            <person name="Burtis K.C."/>
            <person name="Busam D.A."/>
            <person name="Butler H."/>
            <person name="Cadieu E."/>
            <person name="Center A."/>
            <person name="Chandra I."/>
            <person name="Cherry J.M."/>
            <person name="Cawley S."/>
            <person name="Dahlke C."/>
            <person name="Davenport L.B."/>
            <person name="Davies P."/>
            <person name="de Pablos B."/>
            <person name="Delcher A."/>
            <person name="Deng Z."/>
            <person name="Mays A.D."/>
            <person name="Dew I."/>
            <person name="Dietz S.M."/>
            <person name="Dodson K."/>
            <person name="Doup L.E."/>
            <person name="Downes M."/>
            <person name="Dugan-Rocha S."/>
            <person name="Dunkov B.C."/>
            <person name="Dunn P."/>
            <person name="Durbin K.J."/>
            <person name="Evangelista C.C."/>
            <person name="Ferraz C."/>
            <person name="Ferriera S."/>
            <person name="Fleischmann W."/>
            <person name="Fosler C."/>
            <person name="Gabrielian A.E."/>
            <person name="Garg N.S."/>
            <person name="Gelbart W.M."/>
            <person name="Glasser K."/>
            <person name="Glodek A."/>
            <person name="Gong F."/>
            <person name="Gorrell J.H."/>
            <person name="Gu Z."/>
            <person name="Guan P."/>
            <person name="Harris M."/>
            <person name="Harris N.L."/>
            <person name="Harvey D.A."/>
            <person name="Heiman T.J."/>
            <person name="Hernandez J.R."/>
            <person name="Houck J."/>
            <person name="Hostin D."/>
            <person name="Houston K.A."/>
            <person name="Howland T.J."/>
            <person name="Wei M.-H."/>
            <person name="Ibegwam C."/>
            <person name="Jalali M."/>
            <person name="Kalush F."/>
            <person name="Karpen G.H."/>
            <person name="Ke Z."/>
            <person name="Kennison J.A."/>
            <person name="Ketchum K.A."/>
            <person name="Kimmel B.E."/>
            <person name="Kodira C.D."/>
            <person name="Kraft C.L."/>
            <person name="Kravitz S."/>
            <person name="Kulp D."/>
            <person name="Lai Z."/>
            <person name="Lasko P."/>
            <person name="Lei Y."/>
            <person name="Levitsky A.A."/>
            <person name="Li J.H."/>
            <person name="Li Z."/>
            <person name="Liang Y."/>
            <person name="Lin X."/>
            <person name="Liu X."/>
            <person name="Mattei B."/>
            <person name="McIntosh T.C."/>
            <person name="McLeod M.P."/>
            <person name="McPherson D."/>
            <person name="Merkulov G."/>
            <person name="Milshina N.V."/>
            <person name="Mobarry C."/>
            <person name="Morris J."/>
            <person name="Moshrefi A."/>
            <person name="Mount S.M."/>
            <person name="Moy M."/>
            <person name="Murphy B."/>
            <person name="Murphy L."/>
            <person name="Muzny D.M."/>
            <person name="Nelson D.L."/>
            <person name="Nelson D.R."/>
            <person name="Nelson K.A."/>
            <person name="Nixon K."/>
            <person name="Nusskern D.R."/>
            <person name="Pacleb J.M."/>
            <person name="Palazzolo M."/>
            <person name="Pittman G.S."/>
            <person name="Pan S."/>
            <person name="Pollard J."/>
            <person name="Puri V."/>
            <person name="Reese M.G."/>
            <person name="Reinert K."/>
            <person name="Remington K."/>
            <person name="Saunders R.D.C."/>
            <person name="Scheeler F."/>
            <person name="Shen H."/>
            <person name="Shue B.C."/>
            <person name="Siden-Kiamos I."/>
            <person name="Simpson M."/>
            <person name="Skupski M.P."/>
            <person name="Smith T.J."/>
            <person name="Spier E."/>
            <person name="Spradling A.C."/>
            <person name="Stapleton M."/>
            <person name="Strong R."/>
            <person name="Sun E."/>
            <person name="Svirskas R."/>
            <person name="Tector C."/>
            <person name="Turner R."/>
            <person name="Venter E."/>
            <person name="Wang A.H."/>
            <person name="Wang X."/>
            <person name="Wang Z.-Y."/>
            <person name="Wassarman D.A."/>
            <person name="Weinstock G.M."/>
            <person name="Weissenbach J."/>
            <person name="Williams S.M."/>
            <person name="Woodage T."/>
            <person name="Worley K.C."/>
            <person name="Wu D."/>
            <person name="Yang S."/>
            <person name="Yao Q.A."/>
            <person name="Ye J."/>
            <person name="Yeh R.-F."/>
            <person name="Zaveri J.S."/>
            <person name="Zhan M."/>
            <person name="Zhang G."/>
            <person name="Zhao Q."/>
            <person name="Zheng L."/>
            <person name="Zheng X.H."/>
            <person name="Zhong F.N."/>
            <person name="Zhong W."/>
            <person name="Zhou X."/>
            <person name="Zhu S.C."/>
            <person name="Zhu X."/>
            <person name="Smith H.O."/>
            <person name="Gibbs R.A."/>
            <person name="Myers E.W."/>
            <person name="Rubin G.M."/>
            <person name="Venter J.C."/>
        </authorList>
    </citation>
    <scope>NUCLEOTIDE SEQUENCE [LARGE SCALE GENOMIC DNA]</scope>
    <source>
        <strain evidence="11">Berkeley</strain>
    </source>
</reference>
<reference evidence="8 11" key="3">
    <citation type="journal article" date="2002" name="Genome Biol.">
        <title>Annotation of the Drosophila melanogaster euchromatic genome: a systematic review.</title>
        <authorList>
            <person name="Misra S."/>
            <person name="Crosby M.A."/>
            <person name="Mungall C.J."/>
            <person name="Matthews B.B."/>
            <person name="Campbell K.S."/>
            <person name="Hradecky P."/>
            <person name="Huang Y."/>
            <person name="Kaminker J.S."/>
            <person name="Millburn G.H."/>
            <person name="Prochnik S.E."/>
            <person name="Smith C.D."/>
            <person name="Tupy J.L."/>
            <person name="Whitfield E.J."/>
            <person name="Bayraktaroglu L."/>
            <person name="Berman B.P."/>
            <person name="Bettencourt B.R."/>
            <person name="Celniker S.E."/>
            <person name="de Grey A.D.N.J."/>
            <person name="Drysdale R.A."/>
            <person name="Harris N.L."/>
            <person name="Richter J."/>
            <person name="Russo S."/>
            <person name="Schroeder A.J."/>
            <person name="Shu S.Q."/>
            <person name="Stapleton M."/>
            <person name="Yamada C."/>
            <person name="Ashburner M."/>
            <person name="Gelbart W.M."/>
            <person name="Rubin G.M."/>
            <person name="Lewis S.E."/>
        </authorList>
    </citation>
    <scope>GENOME REANNOTATION</scope>
    <scope>ALTERNATIVE SPLICING</scope>
    <source>
        <strain evidence="4">Berkeley</strain>
    </source>
</reference>
<reference evidence="8 12" key="4">
    <citation type="submission" date="2006-06" db="EMBL/GenBank/DDBJ databases">
        <authorList>
            <person name="Stapleton M."/>
            <person name="Agbayani A."/>
            <person name="Brokstein P."/>
            <person name="Carlson J."/>
            <person name="Champe M."/>
            <person name="Chavez C."/>
            <person name="Dorsett V."/>
            <person name="Dresnek D."/>
            <person name="Farfan D."/>
            <person name="Frise E."/>
            <person name="George R."/>
            <person name="Gonzalez M."/>
            <person name="Guarin H."/>
            <person name="Hong L."/>
            <person name="Kronmiller B."/>
            <person name="Lewis S.E."/>
            <person name="Li P."/>
            <person name="Liao G."/>
            <person name="Miranda A."/>
            <person name="Mungall C.J."/>
            <person name="Nunoo J."/>
            <person name="Pacleb J."/>
            <person name="Paragas V."/>
            <person name="Park S."/>
            <person name="Patel S."/>
            <person name="Phouanenavong S."/>
            <person name="Rubin G.M."/>
            <person name="Wan K."/>
            <person name="Yu C."/>
            <person name="Celniker S."/>
        </authorList>
    </citation>
    <scope>NUCLEOTIDE SEQUENCE [LARGE SCALE MRNA] OF 1-207 (ISOFORMS A/B)</scope>
    <scope>NUCLEOTIDE SEQUENCE [LARGE SCALE MRNA] OF 1046-1513 (ISOFORM A)</scope>
    <source>
        <strain evidence="13">Berkeley</strain>
    </source>
</reference>
<reference evidence="8 9" key="5">
    <citation type="journal article" date="2002" name="Genome Biol.">
        <title>A Drosophila full-length cDNA resource.</title>
        <authorList>
            <person name="Stapleton M."/>
            <person name="Carlson J.W."/>
            <person name="Brokstein P."/>
            <person name="Yu C."/>
            <person name="Champe M."/>
            <person name="George R.A."/>
            <person name="Guarin H."/>
            <person name="Kronmiller B."/>
            <person name="Pacleb J.M."/>
            <person name="Park S."/>
            <person name="Wan K.H."/>
            <person name="Rubin G.M."/>
            <person name="Celniker S.E."/>
        </authorList>
    </citation>
    <scope>NUCLEOTIDE SEQUENCE [LARGE SCALE MRNA] OF 578-986 (ISOFORM A)</scope>
    <source>
        <strain evidence="9">Berkeley</strain>
        <tissue evidence="9">Embryo</tissue>
    </source>
</reference>
<reference evidence="8" key="6">
    <citation type="journal article" date="2005" name="Dev. Genes Evol.">
        <title>The transmembrane protein, Tincar, is involved in the development of the compound eye in Drosophila melanogaster.</title>
        <authorList>
            <person name="Hirota Y."/>
            <person name="Sawamoto K."/>
            <person name="Takahashi K."/>
            <person name="Ueda R."/>
            <person name="Okano H."/>
        </authorList>
    </citation>
    <scope>FUNCTION</scope>
    <scope>TISSUE SPECIFICITY</scope>
    <scope>DEVELOPMENTAL STAGE</scope>
    <source>
        <strain evidence="6">Canton-S</strain>
    </source>
</reference>
<protein>
    <recommendedName>
        <fullName>Protein tincar</fullName>
    </recommendedName>
</protein>
<keyword id="KW-0025">Alternative splicing</keyword>
<keyword id="KW-0217">Developmental protein</keyword>
<keyword id="KW-0221">Differentiation</keyword>
<keyword id="KW-0472">Membrane</keyword>
<keyword id="KW-1185">Reference proteome</keyword>
<keyword id="KW-0812">Transmembrane</keyword>
<keyword id="KW-1133">Transmembrane helix</keyword>
<feature type="chain" id="PRO_0000415800" description="Protein tincar">
    <location>
        <begin position="1"/>
        <end position="1513"/>
    </location>
</feature>
<feature type="topological domain" description="Cytoplasmic" evidence="1">
    <location>
        <begin position="1"/>
        <end position="77"/>
    </location>
</feature>
<feature type="transmembrane region" description="Helical" evidence="1">
    <location>
        <begin position="78"/>
        <end position="98"/>
    </location>
</feature>
<feature type="topological domain" description="Extracellular" evidence="1">
    <location>
        <begin position="99"/>
        <end position="120"/>
    </location>
</feature>
<feature type="transmembrane region" description="Helical" evidence="1">
    <location>
        <begin position="121"/>
        <end position="141"/>
    </location>
</feature>
<feature type="topological domain" description="Cytoplasmic" evidence="1">
    <location>
        <begin position="142"/>
        <end position="181"/>
    </location>
</feature>
<feature type="transmembrane region" description="Helical" evidence="1">
    <location>
        <begin position="182"/>
        <end position="202"/>
    </location>
</feature>
<feature type="topological domain" description="Extracellular" evidence="1">
    <location>
        <begin position="203"/>
        <end position="668"/>
    </location>
</feature>
<feature type="transmembrane region" description="Helical" evidence="1">
    <location>
        <begin position="669"/>
        <end position="689"/>
    </location>
</feature>
<feature type="topological domain" description="Cytoplasmic" evidence="1">
    <location>
        <begin position="690"/>
        <end position="696"/>
    </location>
</feature>
<feature type="transmembrane region" description="Helical" evidence="1">
    <location>
        <begin position="697"/>
        <end position="717"/>
    </location>
</feature>
<feature type="topological domain" description="Extracellular" evidence="1">
    <location>
        <begin position="718"/>
        <end position="736"/>
    </location>
</feature>
<feature type="transmembrane region" description="Helical" evidence="1">
    <location>
        <begin position="737"/>
        <end position="757"/>
    </location>
</feature>
<feature type="topological domain" description="Cytoplasmic" evidence="1">
    <location>
        <begin position="758"/>
        <end position="787"/>
    </location>
</feature>
<feature type="transmembrane region" description="Helical" evidence="1">
    <location>
        <begin position="788"/>
        <end position="808"/>
    </location>
</feature>
<feature type="topological domain" description="Extracellular" evidence="1">
    <location>
        <begin position="809"/>
        <end position="826"/>
    </location>
</feature>
<feature type="transmembrane region" description="Helical" evidence="1">
    <location>
        <begin position="827"/>
        <end position="847"/>
    </location>
</feature>
<feature type="topological domain" description="Cytoplasmic" evidence="1">
    <location>
        <begin position="848"/>
        <end position="1513"/>
    </location>
</feature>
<feature type="region of interest" description="Disordered" evidence="2">
    <location>
        <begin position="247"/>
        <end position="266"/>
    </location>
</feature>
<feature type="region of interest" description="Disordered" evidence="2">
    <location>
        <begin position="354"/>
        <end position="373"/>
    </location>
</feature>
<feature type="region of interest" description="Disordered" evidence="2">
    <location>
        <begin position="383"/>
        <end position="532"/>
    </location>
</feature>
<feature type="region of interest" description="Disordered" evidence="2">
    <location>
        <begin position="879"/>
        <end position="913"/>
    </location>
</feature>
<feature type="region of interest" description="Disordered" evidence="2">
    <location>
        <begin position="1045"/>
        <end position="1090"/>
    </location>
</feature>
<feature type="region of interest" description="Disordered" evidence="2">
    <location>
        <begin position="1115"/>
        <end position="1155"/>
    </location>
</feature>
<feature type="region of interest" description="Disordered" evidence="2">
    <location>
        <begin position="1173"/>
        <end position="1214"/>
    </location>
</feature>
<feature type="region of interest" description="Disordered" evidence="2">
    <location>
        <begin position="1231"/>
        <end position="1335"/>
    </location>
</feature>
<feature type="compositionally biased region" description="Low complexity" evidence="2">
    <location>
        <begin position="427"/>
        <end position="466"/>
    </location>
</feature>
<feature type="compositionally biased region" description="Basic residues" evidence="2">
    <location>
        <begin position="478"/>
        <end position="507"/>
    </location>
</feature>
<feature type="compositionally biased region" description="Basic and acidic residues" evidence="2">
    <location>
        <begin position="523"/>
        <end position="532"/>
    </location>
</feature>
<feature type="compositionally biased region" description="Low complexity" evidence="2">
    <location>
        <begin position="879"/>
        <end position="903"/>
    </location>
</feature>
<feature type="compositionally biased region" description="Low complexity" evidence="2">
    <location>
        <begin position="1060"/>
        <end position="1071"/>
    </location>
</feature>
<feature type="compositionally biased region" description="Pro residues" evidence="2">
    <location>
        <begin position="1122"/>
        <end position="1149"/>
    </location>
</feature>
<feature type="compositionally biased region" description="Low complexity" evidence="2">
    <location>
        <begin position="1179"/>
        <end position="1208"/>
    </location>
</feature>
<feature type="compositionally biased region" description="Low complexity" evidence="2">
    <location>
        <begin position="1255"/>
        <end position="1285"/>
    </location>
</feature>
<feature type="compositionally biased region" description="Basic and acidic residues" evidence="2">
    <location>
        <begin position="1286"/>
        <end position="1296"/>
    </location>
</feature>
<feature type="compositionally biased region" description="Pro residues" evidence="2">
    <location>
        <begin position="1303"/>
        <end position="1314"/>
    </location>
</feature>
<feature type="compositionally biased region" description="Polar residues" evidence="2">
    <location>
        <begin position="1324"/>
        <end position="1335"/>
    </location>
</feature>
<feature type="splice variant" id="VSP_042372" description="In isoform B." evidence="7">
    <original>STSDDVLLIGDQEQTDGKRHTSRGA</original>
    <variation>TIRAVEPRYVLPVLRGKLTTASTRH</variation>
    <location>
        <begin position="968"/>
        <end position="992"/>
    </location>
</feature>
<feature type="splice variant" id="VSP_042375" description="In isoform B." evidence="7">
    <location>
        <begin position="993"/>
        <end position="1513"/>
    </location>
</feature>
<feature type="sequence conflict" description="In Ref. 5; AAM29425." evidence="8" ref="5">
    <original>M</original>
    <variation>I</variation>
    <location>
        <position position="922"/>
    </location>
</feature>
<feature type="sequence conflict" description="In Ref. 4; AAR82748." evidence="8" ref="4">
    <original>Q</original>
    <variation>H</variation>
    <location>
        <position position="1314"/>
    </location>
</feature>
<name>TINC_DROME</name>
<gene>
    <name type="primary">tinc</name>
    <name type="ORF">CG31247</name>
</gene>
<comment type="function">
    <text evidence="6">Involved in eye morphogenesis. May be essential for the normal differentiation of ommatidial cells.</text>
</comment>
<comment type="subcellular location">
    <subcellularLocation>
        <location evidence="5 8">Membrane</location>
        <topology evidence="5 8">Multi-pass membrane protein</topology>
    </subcellularLocation>
</comment>
<comment type="alternative products">
    <event type="alternative splicing"/>
    <isoform>
        <id>Q86B91-1</id>
        <name evidence="3">A</name>
        <name evidence="14">E</name>
        <name evidence="14">F</name>
        <name evidence="14">G</name>
        <sequence type="displayed"/>
    </isoform>
    <isoform>
        <id>Q86B91-2</id>
        <name evidence="5">B</name>
        <sequence type="described" ref="VSP_042372 VSP_042375"/>
    </isoform>
</comment>
<comment type="tissue specificity">
    <text evidence="5 6">Expression varies in tissues throughout development. At stage 5, expressed in the embryo dorsal region followed by expression in a striped pattern at stage 6. During gastrulation, expressed in ventral region and ventral nerve cord. Also detected in many neurons in the externa sensilla and chordotonal organ. At stage 16, expressed on the surface of the midgut. Additionally, expressed in a subset of cardioblasts (Tin+ subpopulation) during dorsal vessel formation. In third-instar larval tissues, expressed in the eye and antennal disks. In the antennal disks, expressed in the second antennal segments. In the eye disks, strongest expression found in the ocelli, and in the differentiating ommatidial cells. Also expressed in all cells within and in the vicinity of the morphogenetic furrow.</text>
</comment>
<comment type="developmental stage">
    <text evidence="5 6">Expressed in embryo from stage-5 onwards. Expressed in larvae.</text>
</comment>
<comment type="sequence caution" evidence="8">
    <conflict type="erroneous initiation">
        <sequence resource="EMBL-CDS" id="AAM29425"/>
    </conflict>
    <text>Truncated N-terminus.</text>
</comment>
<comment type="sequence caution" evidence="8">
    <conflict type="miscellaneous discrepancy">
        <sequence resource="EMBL-CDS" id="ABG02199"/>
    </conflict>
    <text>Sequence of unknown origin in the N-terminal part.</text>
</comment>
<organism>
    <name type="scientific">Drosophila melanogaster</name>
    <name type="common">Fruit fly</name>
    <dbReference type="NCBI Taxonomy" id="7227"/>
    <lineage>
        <taxon>Eukaryota</taxon>
        <taxon>Metazoa</taxon>
        <taxon>Ecdysozoa</taxon>
        <taxon>Arthropoda</taxon>
        <taxon>Hexapoda</taxon>
        <taxon>Insecta</taxon>
        <taxon>Pterygota</taxon>
        <taxon>Neoptera</taxon>
        <taxon>Endopterygota</taxon>
        <taxon>Diptera</taxon>
        <taxon>Brachycera</taxon>
        <taxon>Muscomorpha</taxon>
        <taxon>Ephydroidea</taxon>
        <taxon>Drosophilidae</taxon>
        <taxon>Drosophila</taxon>
        <taxon>Sophophora</taxon>
    </lineage>
</organism>
<proteinExistence type="evidence at transcript level"/>